<evidence type="ECO:0000250" key="1"/>
<evidence type="ECO:0000256" key="2">
    <source>
        <dbReference type="SAM" id="MobiDB-lite"/>
    </source>
</evidence>
<evidence type="ECO:0000305" key="3"/>
<protein>
    <recommendedName>
        <fullName>DNA polymerase processivity factor</fullName>
    </recommendedName>
    <alternativeName>
        <fullName>DNA-binding protein UL42</fullName>
    </alternativeName>
    <alternativeName>
        <fullName>Polymerase accessory protein</fullName>
        <shortName>PAP</shortName>
    </alternativeName>
</protein>
<accession>Q6UDI9</accession>
<dbReference type="EMBL" id="AY372243">
    <property type="protein sequence ID" value="AAQ73721.1"/>
    <property type="molecule type" value="Genomic_DNA"/>
</dbReference>
<dbReference type="RefSeq" id="NP_944415.1">
    <property type="nucleotide sequence ID" value="NC_005264.1"/>
</dbReference>
<dbReference type="GeneID" id="2656998"/>
<dbReference type="KEGG" id="vg:2656998"/>
<dbReference type="Proteomes" id="UP000006840">
    <property type="component" value="Segment"/>
</dbReference>
<dbReference type="GO" id="GO:0042025">
    <property type="term" value="C:host cell nucleus"/>
    <property type="evidence" value="ECO:0007669"/>
    <property type="project" value="UniProtKB-SubCell"/>
</dbReference>
<dbReference type="GO" id="GO:0003677">
    <property type="term" value="F:DNA binding"/>
    <property type="evidence" value="ECO:0007669"/>
    <property type="project" value="UniProtKB-KW"/>
</dbReference>
<dbReference type="GO" id="GO:0006260">
    <property type="term" value="P:DNA replication"/>
    <property type="evidence" value="ECO:0007669"/>
    <property type="project" value="UniProtKB-KW"/>
</dbReference>
<comment type="function">
    <text evidence="1">Plays an essential role in viral DNA replication by acting as the polymerase accessory subunit. Associates with the viral polymerase to increase its processivity and forms high-affinity direct interactions with DNA. Facilitates the origin-binding protein UL9 loading onto DNA thus increasing its ability to assemble into a functional complex capable of unwinding duplex DNA (By similarity).</text>
</comment>
<comment type="subunit">
    <text evidence="1">Interacts with the DNA polymerase catalytic subunit UL30. Interacts with the origin-binding protein (By similarity).</text>
</comment>
<comment type="subcellular location">
    <subcellularLocation>
        <location evidence="1">Host nucleus</location>
    </subcellularLocation>
</comment>
<comment type="similarity">
    <text evidence="3">Belongs to the herpesviridae DNA polymerase processivity factor family.</text>
</comment>
<feature type="chain" id="PRO_0000406839" description="DNA polymerase processivity factor">
    <location>
        <begin position="1"/>
        <end position="500"/>
    </location>
</feature>
<feature type="region of interest" description="Disordered" evidence="2">
    <location>
        <begin position="388"/>
        <end position="500"/>
    </location>
</feature>
<feature type="compositionally biased region" description="Polar residues" evidence="2">
    <location>
        <begin position="438"/>
        <end position="449"/>
    </location>
</feature>
<keyword id="KW-0235">DNA replication</keyword>
<keyword id="KW-0238">DNA-binding</keyword>
<keyword id="KW-1048">Host nucleus</keyword>
<keyword id="KW-1185">Reference proteome</keyword>
<gene>
    <name type="primary">UL42</name>
</gene>
<organismHost>
    <name type="scientific">Amazona oratrix</name>
    <name type="common">yellow-headed parrot</name>
    <dbReference type="NCBI Taxonomy" id="152276"/>
</organismHost>
<organism>
    <name type="scientific">Psittacid herpesvirus 1 (isolate Amazon parrot/-/97-0001/1997)</name>
    <name type="common">PsHV-1</name>
    <name type="synonym">Pacheco's disease virus</name>
    <dbReference type="NCBI Taxonomy" id="670426"/>
    <lineage>
        <taxon>Viruses</taxon>
        <taxon>Duplodnaviria</taxon>
        <taxon>Heunggongvirae</taxon>
        <taxon>Peploviricota</taxon>
        <taxon>Herviviricetes</taxon>
        <taxon>Herpesvirales</taxon>
        <taxon>Orthoherpesviridae</taxon>
        <taxon>Alphaherpesvirinae</taxon>
        <taxon>Iltovirus</taxon>
        <taxon>Iltovirus psittacidalpha1</taxon>
        <taxon>Psittacid alphaherpesvirus 1</taxon>
    </lineage>
</organism>
<reference key="1">
    <citation type="journal article" date="2006" name="J. Virol.">
        <title>Psittacid herpesvirus 1 and infectious laryngotracheitis virus: Comparative genome sequence analysis of two avian alphaherpesviruses.</title>
        <authorList>
            <person name="Thureen D.R."/>
            <person name="Keeler C.L. Jr."/>
        </authorList>
    </citation>
    <scope>NUCLEOTIDE SEQUENCE [LARGE SCALE GENOMIC DNA]</scope>
</reference>
<sequence>MSSTANSAAHEHAEKTIEADAATGAAEDTSAQLGAERGATRFDIVLGKRGCELAAPVLRAVKCLITGAFLVMRKYSVVVYCATERGLVYVDLGWTIFDQYDFLPGGSDDPLLFSVATPQNGFLLDFLCDPPKKCAQDPVLSARFLVTDSDDPEEARELLKLIVTRESGTSTKIKRAAQTDERIYMPTANSACQVALEPYSHTEITKWLGALPKDAGVKVSISDTALGLERIGCAADSVSFNAQWMDRRADRVTSCDILAKLTGVGPDAGKRSLSARSALKKLKENRVVAVHSGSGWVHSELGWPESVRVRSAQSLKKALQWLKIGAWGVPNLVFYKDKVTGLGVELSGRGEEDLWGCILFFDSEEMDDLTAQEFQEPEDCAEADYGAVSESDDAAAETHRGADGIDGADEEDSCPDMMLISATTLTQQPGRKRAPGATLQQSAQPSSPATHRKQKRPAGAARTGAGDTEQNCVHDGEASLRAPCPASNDDQEPANKRGKR</sequence>
<proteinExistence type="inferred from homology"/>
<name>PAP_PSHV1</name>